<organism>
    <name type="scientific">Delftia acidovorans (strain DSM 14801 / SPH-1)</name>
    <dbReference type="NCBI Taxonomy" id="398578"/>
    <lineage>
        <taxon>Bacteria</taxon>
        <taxon>Pseudomonadati</taxon>
        <taxon>Pseudomonadota</taxon>
        <taxon>Betaproteobacteria</taxon>
        <taxon>Burkholderiales</taxon>
        <taxon>Comamonadaceae</taxon>
        <taxon>Delftia</taxon>
    </lineage>
</organism>
<comment type="function">
    <text evidence="1">Catalyzes the NADPH-dependent reduction of 7-cyano-7-deazaguanine (preQ0) to 7-aminomethyl-7-deazaguanine (preQ1).</text>
</comment>
<comment type="catalytic activity">
    <reaction evidence="1">
        <text>7-aminomethyl-7-carbaguanine + 2 NADP(+) = 7-cyano-7-deazaguanine + 2 NADPH + 3 H(+)</text>
        <dbReference type="Rhea" id="RHEA:13409"/>
        <dbReference type="ChEBI" id="CHEBI:15378"/>
        <dbReference type="ChEBI" id="CHEBI:45075"/>
        <dbReference type="ChEBI" id="CHEBI:57783"/>
        <dbReference type="ChEBI" id="CHEBI:58349"/>
        <dbReference type="ChEBI" id="CHEBI:58703"/>
        <dbReference type="EC" id="1.7.1.13"/>
    </reaction>
</comment>
<comment type="pathway">
    <text evidence="1">tRNA modification; tRNA-queuosine biosynthesis.</text>
</comment>
<comment type="subunit">
    <text evidence="1">Homodimer.</text>
</comment>
<comment type="subcellular location">
    <subcellularLocation>
        <location evidence="1">Cytoplasm</location>
    </subcellularLocation>
</comment>
<comment type="similarity">
    <text evidence="1">Belongs to the GTP cyclohydrolase I family. QueF type 2 subfamily.</text>
</comment>
<accession>A9BNL9</accession>
<feature type="chain" id="PRO_1000134277" description="NADPH-dependent 7-cyano-7-deazaguanine reductase">
    <location>
        <begin position="1"/>
        <end position="282"/>
    </location>
</feature>
<feature type="active site" description="Thioimide intermediate" evidence="1">
    <location>
        <position position="189"/>
    </location>
</feature>
<feature type="active site" description="Proton donor" evidence="1">
    <location>
        <position position="196"/>
    </location>
</feature>
<feature type="binding site" evidence="1">
    <location>
        <begin position="82"/>
        <end position="84"/>
    </location>
    <ligand>
        <name>substrate</name>
    </ligand>
</feature>
<feature type="binding site" evidence="1">
    <location>
        <begin position="84"/>
        <end position="85"/>
    </location>
    <ligand>
        <name>NADPH</name>
        <dbReference type="ChEBI" id="CHEBI:57783"/>
    </ligand>
</feature>
<feature type="binding site" evidence="1">
    <location>
        <begin position="228"/>
        <end position="229"/>
    </location>
    <ligand>
        <name>substrate</name>
    </ligand>
</feature>
<feature type="binding site" evidence="1">
    <location>
        <begin position="257"/>
        <end position="258"/>
    </location>
    <ligand>
        <name>NADPH</name>
        <dbReference type="ChEBI" id="CHEBI:57783"/>
    </ligand>
</feature>
<proteinExistence type="inferred from homology"/>
<protein>
    <recommendedName>
        <fullName evidence="1">NADPH-dependent 7-cyano-7-deazaguanine reductase</fullName>
        <ecNumber evidence="1">1.7.1.13</ecNumber>
    </recommendedName>
    <alternativeName>
        <fullName evidence="1">7-cyano-7-carbaguanine reductase</fullName>
    </alternativeName>
    <alternativeName>
        <fullName evidence="1">NADPH-dependent nitrile oxidoreductase</fullName>
    </alternativeName>
    <alternativeName>
        <fullName evidence="1">PreQ(0) reductase</fullName>
    </alternativeName>
</protein>
<keyword id="KW-0963">Cytoplasm</keyword>
<keyword id="KW-0521">NADP</keyword>
<keyword id="KW-0560">Oxidoreductase</keyword>
<keyword id="KW-0671">Queuosine biosynthesis</keyword>
<keyword id="KW-1185">Reference proteome</keyword>
<evidence type="ECO:0000255" key="1">
    <source>
        <dbReference type="HAMAP-Rule" id="MF_00817"/>
    </source>
</evidence>
<name>QUEF_DELAS</name>
<dbReference type="EC" id="1.7.1.13" evidence="1"/>
<dbReference type="EMBL" id="CP000884">
    <property type="protein sequence ID" value="ABX37914.1"/>
    <property type="molecule type" value="Genomic_DNA"/>
</dbReference>
<dbReference type="RefSeq" id="WP_012207083.1">
    <property type="nucleotide sequence ID" value="NC_010002.1"/>
</dbReference>
<dbReference type="SMR" id="A9BNL9"/>
<dbReference type="STRING" id="398578.Daci_5285"/>
<dbReference type="GeneID" id="24116515"/>
<dbReference type="KEGG" id="dac:Daci_5285"/>
<dbReference type="eggNOG" id="COG0780">
    <property type="taxonomic scope" value="Bacteria"/>
</dbReference>
<dbReference type="eggNOG" id="COG2904">
    <property type="taxonomic scope" value="Bacteria"/>
</dbReference>
<dbReference type="HOGENOM" id="CLU_054738_0_0_4"/>
<dbReference type="UniPathway" id="UPA00392"/>
<dbReference type="Proteomes" id="UP000000784">
    <property type="component" value="Chromosome"/>
</dbReference>
<dbReference type="GO" id="GO:0005737">
    <property type="term" value="C:cytoplasm"/>
    <property type="evidence" value="ECO:0007669"/>
    <property type="project" value="UniProtKB-SubCell"/>
</dbReference>
<dbReference type="GO" id="GO:0033739">
    <property type="term" value="F:preQ1 synthase activity"/>
    <property type="evidence" value="ECO:0007669"/>
    <property type="project" value="UniProtKB-UniRule"/>
</dbReference>
<dbReference type="GO" id="GO:0008616">
    <property type="term" value="P:queuosine biosynthetic process"/>
    <property type="evidence" value="ECO:0007669"/>
    <property type="project" value="UniProtKB-UniRule"/>
</dbReference>
<dbReference type="GO" id="GO:0006400">
    <property type="term" value="P:tRNA modification"/>
    <property type="evidence" value="ECO:0007669"/>
    <property type="project" value="UniProtKB-UniRule"/>
</dbReference>
<dbReference type="Gene3D" id="3.30.1130.10">
    <property type="match status" value="2"/>
</dbReference>
<dbReference type="HAMAP" id="MF_00817">
    <property type="entry name" value="QueF_type2"/>
    <property type="match status" value="1"/>
</dbReference>
<dbReference type="InterPro" id="IPR043133">
    <property type="entry name" value="GTP-CH-I_C/QueF"/>
</dbReference>
<dbReference type="InterPro" id="IPR050084">
    <property type="entry name" value="NADPH_dep_7-cyano-7-deazaG_red"/>
</dbReference>
<dbReference type="InterPro" id="IPR029500">
    <property type="entry name" value="QueF"/>
</dbReference>
<dbReference type="InterPro" id="IPR029139">
    <property type="entry name" value="QueF_N"/>
</dbReference>
<dbReference type="InterPro" id="IPR016428">
    <property type="entry name" value="QueF_type2"/>
</dbReference>
<dbReference type="NCBIfam" id="TIGR03138">
    <property type="entry name" value="QueF"/>
    <property type="match status" value="1"/>
</dbReference>
<dbReference type="PANTHER" id="PTHR34354">
    <property type="entry name" value="NADPH-DEPENDENT 7-CYANO-7-DEAZAGUANINE REDUCTASE"/>
    <property type="match status" value="1"/>
</dbReference>
<dbReference type="PANTHER" id="PTHR34354:SF1">
    <property type="entry name" value="NADPH-DEPENDENT 7-CYANO-7-DEAZAGUANINE REDUCTASE"/>
    <property type="match status" value="1"/>
</dbReference>
<dbReference type="Pfam" id="PF14489">
    <property type="entry name" value="QueF"/>
    <property type="match status" value="1"/>
</dbReference>
<dbReference type="Pfam" id="PF14819">
    <property type="entry name" value="QueF_N"/>
    <property type="match status" value="1"/>
</dbReference>
<dbReference type="PIRSF" id="PIRSF004750">
    <property type="entry name" value="Nitrile_oxidored_YqcD_prd"/>
    <property type="match status" value="1"/>
</dbReference>
<dbReference type="SUPFAM" id="SSF55620">
    <property type="entry name" value="Tetrahydrobiopterin biosynthesis enzymes-like"/>
    <property type="match status" value="1"/>
</dbReference>
<reference key="1">
    <citation type="submission" date="2007-11" db="EMBL/GenBank/DDBJ databases">
        <title>Complete sequence of Delftia acidovorans DSM 14801 / SPH-1.</title>
        <authorList>
            <person name="Copeland A."/>
            <person name="Lucas S."/>
            <person name="Lapidus A."/>
            <person name="Barry K."/>
            <person name="Glavina del Rio T."/>
            <person name="Dalin E."/>
            <person name="Tice H."/>
            <person name="Pitluck S."/>
            <person name="Lowry S."/>
            <person name="Clum A."/>
            <person name="Schmutz J."/>
            <person name="Larimer F."/>
            <person name="Land M."/>
            <person name="Hauser L."/>
            <person name="Kyrpides N."/>
            <person name="Kim E."/>
            <person name="Schleheck D."/>
            <person name="Richardson P."/>
        </authorList>
    </citation>
    <scope>NUCLEOTIDE SEQUENCE [LARGE SCALE GENOMIC DNA]</scope>
    <source>
        <strain>DSM 14801 / SPH-1</strain>
    </source>
</reference>
<gene>
    <name evidence="1" type="primary">queF</name>
    <name type="ordered locus">Daci_5285</name>
</gene>
<sequence>MNTPEQSQLGKSSAYIDQYAPSLLFPLPRAPKREEIGVQGSQMPFFGADLWTAFELSWLNLRGKPQVALVHFTIPCETPNLIESKSFKLYLNSFNNTRLADAAEVQARLRTDLAEALWRGSEQKGSIGVKIIGLDRFDQEMVQELDGLLLDRLDVECTQYQPAPELLHANHEEAPVTETLVSHLLKSNCLVTGQPDWGSVQIRYSGAQIDQEGLLQYLVSFRNHNEFHEQCVERIFMDIWTRCRPLKLSVYARYTRRGGLDINPFRTSHPGALPANVRSARQ</sequence>